<sequence length="391" mass="42117">MRRTRSTRRALLVAVCLSPLIALAAWQAYPFRSNNFDTVSVSRGSIESSVSALGTLQPRRYVDVGAQASGQIRKLHVEAGDDVTEGQLLVEIDPSTQQAKVDAGRYSIEMLKAQLAEQRAQYTLARQQYQRQQRLAAGGATRTEDVQSAQAQMLATQARIEMYQAQIRQAQASLRSDEAELGYTRIYAPMSGTVVAVDAREGQTLNAQQQTPLILRIAKLSPMTVWAQVSEADIGRVKPGMPAYFTTLSGEGRRWTGKVRQILPVPPKPLDQSNQGGGSPTSGSGGQSGSGRVVLYTVLVDVDNGDHQLMAEMTAQVFFVAATAENILTAPVAAIHDDGKGGQVAWVVGSNGKPQSRQIRTGISDRLRVQVLAGLEEGDRLLMAAPDGSDS</sequence>
<protein>
    <recommendedName>
        <fullName evidence="9">Pyoverdine export membrane fusion protein PvdR</fullName>
    </recommendedName>
</protein>
<accession>Q9I191</accession>
<comment type="function">
    <text evidence="1 4 5 6 7">Part of the tripartite efflux system PvdRT-OpmQ required for the secretion into the extracellular milieu of the siderophore pyoverdine (PVD), which is involved in iron acquisition (PubMed:19906986, PubMed:21035449, PubMed:22187978, PubMed:23766114). This subunit is an adapter protein that stimulates the ATPase activity of PvdT and connects the inner and outer membrane components (By similarity). The system is responsible for export of newly synthesized PVD after the final steps of biosynthesis have taken place in the periplasm (PubMed:21035449). It is also responsible for recycling of PVD after internalization of ferri-PVD into the periplasm by the outer-membrane receptor FpvA and release of iron from PVD, thus making PVD available for new cycles of iron uptake (PubMed:19906986, PubMed:23766114). In addition, can expel unwanted metals complexed with PVD from the periplasm into the extracellular medium (PubMed:22187978). Does not contribute to resistance to antibiotics belonging to the classes of tetracyclines, aminoglycosides, beta-lactams and macrolides, and chloramphenicol (PubMed:19906986).</text>
</comment>
<comment type="subunit">
    <text evidence="4 5 7">Part of the tripartite efflux system PvdRT-OpmQ, which is composed of an inner membrane component with both ATPase and permease domains, PvdT, a periplasmic membrane fusion protein, PvdR, and an outer membrane component, OpmQ.</text>
</comment>
<comment type="subcellular location">
    <subcellularLocation>
        <location evidence="10">Periplasm</location>
    </subcellularLocation>
</comment>
<comment type="induction">
    <text evidence="4">Expression is iron-regulated and under the tight control of the PVD-specific PvdS sigma factor.</text>
</comment>
<comment type="disruption phenotype">
    <text evidence="4 5 6 7">Mutant shows reduction of extracellular PVD levels and accumulates PVD in the periplasm (PubMed:19906986). Mutant lacking pvdRT-opmQ secretes PVD and can import ferri-PVD, but has an approximately 20-fold increase in the amount of PVD present in the periplasm (PubMed:23766114). The pvdRT-opmQ deletion mutant also accumulates newly synthesized PVD in the periplasm (PubMed:21035449). Mutant accumulates unwanted PVD-metal complexes (PubMed:22187978).</text>
</comment>
<comment type="miscellaneous">
    <text evidence="4 5 7">Was originally thought to be involved only in PVD recycling (PubMed:19906986, PubMed:23766114). It was later shown to be involved in the secretion of both newly synthesized PVD and recycled PVD (PubMed:21035449).</text>
</comment>
<comment type="similarity">
    <text evidence="9">Belongs to the membrane fusion protein (MFP) (TC 8.A.1) family.</text>
</comment>
<gene>
    <name evidence="8" type="primary">pvdR</name>
    <name evidence="11" type="ordered locus">PA2389</name>
</gene>
<name>PVDR_PSEAE</name>
<keyword id="KW-0175">Coiled coil</keyword>
<keyword id="KW-0574">Periplasm</keyword>
<keyword id="KW-1185">Reference proteome</keyword>
<keyword id="KW-0732">Signal</keyword>
<keyword id="KW-0813">Transport</keyword>
<feature type="signal peptide" evidence="2">
    <location>
        <begin position="1"/>
        <end position="24"/>
    </location>
</feature>
<feature type="chain" id="PRO_5004331261" description="Pyoverdine export membrane fusion protein PvdR">
    <location>
        <begin position="25"/>
        <end position="391"/>
    </location>
</feature>
<feature type="region of interest" description="Disordered" evidence="3">
    <location>
        <begin position="263"/>
        <end position="289"/>
    </location>
</feature>
<feature type="coiled-coil region" evidence="2">
    <location>
        <begin position="108"/>
        <end position="180"/>
    </location>
</feature>
<feature type="compositionally biased region" description="Gly residues" evidence="3">
    <location>
        <begin position="275"/>
        <end position="289"/>
    </location>
</feature>
<reference key="1">
    <citation type="journal article" date="2000" name="Nature">
        <title>Complete genome sequence of Pseudomonas aeruginosa PAO1, an opportunistic pathogen.</title>
        <authorList>
            <person name="Stover C.K."/>
            <person name="Pham X.-Q.T."/>
            <person name="Erwin A.L."/>
            <person name="Mizoguchi S.D."/>
            <person name="Warrener P."/>
            <person name="Hickey M.J."/>
            <person name="Brinkman F.S.L."/>
            <person name="Hufnagle W.O."/>
            <person name="Kowalik D.J."/>
            <person name="Lagrou M."/>
            <person name="Garber R.L."/>
            <person name="Goltry L."/>
            <person name="Tolentino E."/>
            <person name="Westbrock-Wadman S."/>
            <person name="Yuan Y."/>
            <person name="Brody L.L."/>
            <person name="Coulter S.N."/>
            <person name="Folger K.R."/>
            <person name="Kas A."/>
            <person name="Larbig K."/>
            <person name="Lim R.M."/>
            <person name="Smith K.A."/>
            <person name="Spencer D.H."/>
            <person name="Wong G.K.-S."/>
            <person name="Wu Z."/>
            <person name="Paulsen I.T."/>
            <person name="Reizer J."/>
            <person name="Saier M.H. Jr."/>
            <person name="Hancock R.E.W."/>
            <person name="Lory S."/>
            <person name="Olson M.V."/>
        </authorList>
    </citation>
    <scope>NUCLEOTIDE SEQUENCE [LARGE SCALE GENOMIC DNA]</scope>
    <source>
        <strain>ATCC 15692 / DSM 22644 / CIP 104116 / JCM 14847 / LMG 12228 / 1C / PRS 101 / PAO1</strain>
    </source>
</reference>
<reference key="2">
    <citation type="journal article" date="2009" name="Proc. Natl. Acad. Sci. U.S.A.">
        <title>Molecular basis of pyoverdine siderophore recycling in Pseudomonas aeruginosa.</title>
        <authorList>
            <person name="Imperi F."/>
            <person name="Tiburzi F."/>
            <person name="Visca P."/>
        </authorList>
    </citation>
    <scope>FUNCTION</scope>
    <scope>SUBUNIT</scope>
    <scope>INDUCTION</scope>
    <scope>DISRUPTION PHENOTYPE</scope>
    <source>
        <strain>ATCC 15692 / DSM 22644 / CIP 104116 / JCM 14847 / LMG 12228 / 1C / PRS 101 / PAO1</strain>
    </source>
</reference>
<reference key="3">
    <citation type="journal article" date="2010" name="Environ. Microbiol. Rep.">
        <title>An efflux pump is required for siderophore recycling by Pseudomonas aeruginosa.</title>
        <authorList>
            <person name="Yeterian E."/>
            <person name="Martin L.W."/>
            <person name="Lamont I.L."/>
            <person name="Schalk I.J."/>
        </authorList>
    </citation>
    <scope>FUNCTION</scope>
    <scope>SUBUNIT</scope>
    <scope>DISRUPTION PHENOTYPE</scope>
    <source>
        <strain>ATCC 15692 / DSM 22644 / CIP 104116 / JCM 14847 / LMG 12228 / 1C / PRS 101 / PAO1</strain>
    </source>
</reference>
<reference key="4">
    <citation type="journal article" date="2010" name="FEBS Lett.">
        <title>An efflux pump is involved in secretion of newly synthesized siderophore by Pseudomonas aeruginosa.</title>
        <authorList>
            <person name="Hannauer M."/>
            <person name="Yeterian E."/>
            <person name="Martin L.W."/>
            <person name="Lamont I.L."/>
            <person name="Schalk I.J."/>
        </authorList>
    </citation>
    <scope>FUNCTION IN SECRETION OF NEWLY SYNTHESIZED PYOVERDINE</scope>
    <scope>SUBUNIT</scope>
    <scope>DISRUPTION PHENOTYPE</scope>
    <source>
        <strain>ATCC 15692 / DSM 22644 / CIP 104116 / JCM 14847 / LMG 12228 / 1C / PRS 101 / PAO1</strain>
    </source>
</reference>
<reference key="5">
    <citation type="journal article" date="2012" name="Environ. Microbiol.">
        <title>The PvdRT-OpmQ efflux pump controls the metal selectivity of the iron uptake pathway mediated by the siderophore pyoverdine in Pseudomonas aeruginosa.</title>
        <authorList>
            <person name="Hannauer M."/>
            <person name="Braud A."/>
            <person name="Hoegy F."/>
            <person name="Ronot P."/>
            <person name="Boos A."/>
            <person name="Schalk I.J."/>
        </authorList>
    </citation>
    <scope>FUNCTION IN EXPORT OF UNWANTED METALS COMPLEXED WITH PVD</scope>
    <scope>DISRUPTION PHENOTYPE</scope>
    <source>
        <strain>ATCC 15692 / DSM 22644 / CIP 104116 / JCM 14847 / LMG 12228 / 1C / PRS 101 / PAO1</strain>
    </source>
</reference>
<organism>
    <name type="scientific">Pseudomonas aeruginosa (strain ATCC 15692 / DSM 22644 / CIP 104116 / JCM 14847 / LMG 12228 / 1C / PRS 101 / PAO1)</name>
    <dbReference type="NCBI Taxonomy" id="208964"/>
    <lineage>
        <taxon>Bacteria</taxon>
        <taxon>Pseudomonadati</taxon>
        <taxon>Pseudomonadota</taxon>
        <taxon>Gammaproteobacteria</taxon>
        <taxon>Pseudomonadales</taxon>
        <taxon>Pseudomonadaceae</taxon>
        <taxon>Pseudomonas</taxon>
    </lineage>
</organism>
<dbReference type="EMBL" id="AE004091">
    <property type="protein sequence ID" value="AAG05777.1"/>
    <property type="molecule type" value="Genomic_DNA"/>
</dbReference>
<dbReference type="PIR" id="G83346">
    <property type="entry name" value="G83346"/>
</dbReference>
<dbReference type="RefSeq" id="NP_251079.1">
    <property type="nucleotide sequence ID" value="NC_002516.2"/>
</dbReference>
<dbReference type="RefSeq" id="WP_003114507.1">
    <property type="nucleotide sequence ID" value="NZ_QZGE01000021.1"/>
</dbReference>
<dbReference type="SMR" id="Q9I191"/>
<dbReference type="FunCoup" id="Q9I191">
    <property type="interactions" value="352"/>
</dbReference>
<dbReference type="STRING" id="208964.PA2389"/>
<dbReference type="PaxDb" id="208964-PA2389"/>
<dbReference type="DNASU" id="882270"/>
<dbReference type="GeneID" id="882270"/>
<dbReference type="KEGG" id="pae:PA2389"/>
<dbReference type="PATRIC" id="fig|208964.12.peg.2500"/>
<dbReference type="PseudoCAP" id="PA2389"/>
<dbReference type="HOGENOM" id="CLU_018816_14_1_6"/>
<dbReference type="InParanoid" id="Q9I191"/>
<dbReference type="OrthoDB" id="9791520at2"/>
<dbReference type="PhylomeDB" id="Q9I191"/>
<dbReference type="BioCyc" id="PAER208964:G1FZ6-2427-MONOMER"/>
<dbReference type="Proteomes" id="UP000002438">
    <property type="component" value="Chromosome"/>
</dbReference>
<dbReference type="GO" id="GO:1990281">
    <property type="term" value="C:efflux pump complex"/>
    <property type="evidence" value="ECO:0000314"/>
    <property type="project" value="PseudoCAP"/>
</dbReference>
<dbReference type="GO" id="GO:0019898">
    <property type="term" value="C:extrinsic component of membrane"/>
    <property type="evidence" value="ECO:0007669"/>
    <property type="project" value="InterPro"/>
</dbReference>
<dbReference type="GO" id="GO:1990195">
    <property type="term" value="C:macrolide transmembrane transporter complex"/>
    <property type="evidence" value="ECO:0007669"/>
    <property type="project" value="InterPro"/>
</dbReference>
<dbReference type="GO" id="GO:0042597">
    <property type="term" value="C:periplasmic space"/>
    <property type="evidence" value="ECO:0007669"/>
    <property type="project" value="UniProtKB-SubCell"/>
</dbReference>
<dbReference type="GO" id="GO:0015562">
    <property type="term" value="F:efflux transmembrane transporter activity"/>
    <property type="evidence" value="ECO:0000314"/>
    <property type="project" value="PseudoCAP"/>
</dbReference>
<dbReference type="GO" id="GO:0002049">
    <property type="term" value="P:pyoverdine biosynthetic process"/>
    <property type="evidence" value="ECO:0000315"/>
    <property type="project" value="PseudoCAP"/>
</dbReference>
<dbReference type="GO" id="GO:1990961">
    <property type="term" value="P:xenobiotic detoxification by transmembrane export across the plasma membrane"/>
    <property type="evidence" value="ECO:0007669"/>
    <property type="project" value="InterPro"/>
</dbReference>
<dbReference type="Gene3D" id="2.40.30.170">
    <property type="match status" value="1"/>
</dbReference>
<dbReference type="Gene3D" id="2.40.420.20">
    <property type="match status" value="1"/>
</dbReference>
<dbReference type="Gene3D" id="2.40.50.100">
    <property type="match status" value="1"/>
</dbReference>
<dbReference type="Gene3D" id="6.10.140.1990">
    <property type="match status" value="1"/>
</dbReference>
<dbReference type="InterPro" id="IPR032317">
    <property type="entry name" value="CusB_D23"/>
</dbReference>
<dbReference type="InterPro" id="IPR030190">
    <property type="entry name" value="MacA_alpha-hairpin_sf"/>
</dbReference>
<dbReference type="InterPro" id="IPR006143">
    <property type="entry name" value="RND_pump_MFP"/>
</dbReference>
<dbReference type="NCBIfam" id="TIGR01730">
    <property type="entry name" value="RND_mfp"/>
    <property type="match status" value="1"/>
</dbReference>
<dbReference type="PANTHER" id="PTHR30469">
    <property type="entry name" value="MULTIDRUG RESISTANCE PROTEIN MDTA"/>
    <property type="match status" value="1"/>
</dbReference>
<dbReference type="PANTHER" id="PTHR30469:SF33">
    <property type="entry name" value="SLR1207 PROTEIN"/>
    <property type="match status" value="1"/>
</dbReference>
<dbReference type="Pfam" id="PF16576">
    <property type="entry name" value="HlyD_D23"/>
    <property type="match status" value="1"/>
</dbReference>
<dbReference type="SUPFAM" id="SSF111369">
    <property type="entry name" value="HlyD-like secretion proteins"/>
    <property type="match status" value="1"/>
</dbReference>
<evidence type="ECO:0000250" key="1">
    <source>
        <dbReference type="UniProtKB" id="Q88F89"/>
    </source>
</evidence>
<evidence type="ECO:0000255" key="2"/>
<evidence type="ECO:0000256" key="3">
    <source>
        <dbReference type="SAM" id="MobiDB-lite"/>
    </source>
</evidence>
<evidence type="ECO:0000269" key="4">
    <source>
    </source>
</evidence>
<evidence type="ECO:0000269" key="5">
    <source>
    </source>
</evidence>
<evidence type="ECO:0000269" key="6">
    <source>
    </source>
</evidence>
<evidence type="ECO:0000269" key="7">
    <source>
    </source>
</evidence>
<evidence type="ECO:0000303" key="8">
    <source>
    </source>
</evidence>
<evidence type="ECO:0000305" key="9"/>
<evidence type="ECO:0000305" key="10">
    <source>
    </source>
</evidence>
<evidence type="ECO:0000312" key="11">
    <source>
        <dbReference type="EMBL" id="AAG05777.1"/>
    </source>
</evidence>
<proteinExistence type="evidence at protein level"/>